<evidence type="ECO:0000255" key="1">
    <source>
        <dbReference type="HAMAP-Rule" id="MF_00297"/>
    </source>
</evidence>
<protein>
    <recommendedName>
        <fullName evidence="1">NAD-capped RNA hydrolase NudC</fullName>
        <shortName evidence="1">DeNADding enzyme NudC</shortName>
        <ecNumber evidence="1">3.6.1.-</ecNumber>
    </recommendedName>
    <alternativeName>
        <fullName evidence="1">NADH pyrophosphatase</fullName>
        <ecNumber evidence="1">3.6.1.22</ecNumber>
    </alternativeName>
</protein>
<feature type="chain" id="PRO_1000021919" description="NAD-capped RNA hydrolase NudC">
    <location>
        <begin position="1"/>
        <end position="260"/>
    </location>
</feature>
<feature type="domain" description="Nudix hydrolase" evidence="1">
    <location>
        <begin position="125"/>
        <end position="248"/>
    </location>
</feature>
<feature type="short sequence motif" description="Nudix box" evidence="1">
    <location>
        <begin position="159"/>
        <end position="180"/>
    </location>
</feature>
<feature type="binding site" evidence="1">
    <location>
        <position position="25"/>
    </location>
    <ligand>
        <name>substrate</name>
    </ligand>
</feature>
<feature type="binding site" evidence="1">
    <location>
        <position position="69"/>
    </location>
    <ligand>
        <name>substrate</name>
    </ligand>
</feature>
<feature type="binding site" evidence="1">
    <location>
        <position position="98"/>
    </location>
    <ligand>
        <name>Zn(2+)</name>
        <dbReference type="ChEBI" id="CHEBI:29105"/>
    </ligand>
</feature>
<feature type="binding site" evidence="1">
    <location>
        <position position="101"/>
    </location>
    <ligand>
        <name>Zn(2+)</name>
        <dbReference type="ChEBI" id="CHEBI:29105"/>
    </ligand>
</feature>
<feature type="binding site" evidence="1">
    <location>
        <position position="111"/>
    </location>
    <ligand>
        <name>substrate</name>
    </ligand>
</feature>
<feature type="binding site" evidence="1">
    <location>
        <position position="116"/>
    </location>
    <ligand>
        <name>Zn(2+)</name>
        <dbReference type="ChEBI" id="CHEBI:29105"/>
    </ligand>
</feature>
<feature type="binding site" evidence="1">
    <location>
        <position position="119"/>
    </location>
    <ligand>
        <name>Zn(2+)</name>
        <dbReference type="ChEBI" id="CHEBI:29105"/>
    </ligand>
</feature>
<feature type="binding site" evidence="1">
    <location>
        <position position="124"/>
    </location>
    <ligand>
        <name>substrate</name>
    </ligand>
</feature>
<feature type="binding site" evidence="1">
    <location>
        <position position="158"/>
    </location>
    <ligand>
        <name>a divalent metal cation</name>
        <dbReference type="ChEBI" id="CHEBI:60240"/>
        <label>1</label>
    </ligand>
</feature>
<feature type="binding site" evidence="1">
    <location>
        <position position="174"/>
    </location>
    <ligand>
        <name>a divalent metal cation</name>
        <dbReference type="ChEBI" id="CHEBI:60240"/>
        <label>2</label>
    </ligand>
</feature>
<feature type="binding site" evidence="1">
    <location>
        <position position="174"/>
    </location>
    <ligand>
        <name>a divalent metal cation</name>
        <dbReference type="ChEBI" id="CHEBI:60240"/>
        <label>3</label>
    </ligand>
</feature>
<feature type="binding site" evidence="1">
    <location>
        <position position="178"/>
    </location>
    <ligand>
        <name>a divalent metal cation</name>
        <dbReference type="ChEBI" id="CHEBI:60240"/>
        <label>1</label>
    </ligand>
</feature>
<feature type="binding site" evidence="1">
    <location>
        <position position="178"/>
    </location>
    <ligand>
        <name>a divalent metal cation</name>
        <dbReference type="ChEBI" id="CHEBI:60240"/>
        <label>3</label>
    </ligand>
</feature>
<feature type="binding site" evidence="1">
    <location>
        <begin position="192"/>
        <end position="199"/>
    </location>
    <ligand>
        <name>substrate</name>
    </ligand>
</feature>
<feature type="binding site" evidence="1">
    <location>
        <position position="219"/>
    </location>
    <ligand>
        <name>a divalent metal cation</name>
        <dbReference type="ChEBI" id="CHEBI:60240"/>
        <label>1</label>
    </ligand>
</feature>
<feature type="binding site" evidence="1">
    <location>
        <position position="219"/>
    </location>
    <ligand>
        <name>a divalent metal cation</name>
        <dbReference type="ChEBI" id="CHEBI:60240"/>
        <label>3</label>
    </ligand>
</feature>
<feature type="binding site" evidence="1">
    <location>
        <position position="241"/>
    </location>
    <ligand>
        <name>substrate</name>
    </ligand>
</feature>
<organism>
    <name type="scientific">Yersinia pestis (strain Pestoides F)</name>
    <dbReference type="NCBI Taxonomy" id="386656"/>
    <lineage>
        <taxon>Bacteria</taxon>
        <taxon>Pseudomonadati</taxon>
        <taxon>Pseudomonadota</taxon>
        <taxon>Gammaproteobacteria</taxon>
        <taxon>Enterobacterales</taxon>
        <taxon>Yersiniaceae</taxon>
        <taxon>Yersinia</taxon>
    </lineage>
</organism>
<dbReference type="EC" id="3.6.1.-" evidence="1"/>
<dbReference type="EC" id="3.6.1.22" evidence="1"/>
<dbReference type="EMBL" id="CP000668">
    <property type="protein sequence ID" value="ABP42084.1"/>
    <property type="molecule type" value="Genomic_DNA"/>
</dbReference>
<dbReference type="RefSeq" id="WP_002210684.1">
    <property type="nucleotide sequence ID" value="NZ_CP009715.1"/>
</dbReference>
<dbReference type="SMR" id="A4TS22"/>
<dbReference type="GeneID" id="57974981"/>
<dbReference type="KEGG" id="ypp:YPDSF_3734"/>
<dbReference type="PATRIC" id="fig|386656.14.peg.790"/>
<dbReference type="GO" id="GO:0005829">
    <property type="term" value="C:cytosol"/>
    <property type="evidence" value="ECO:0007669"/>
    <property type="project" value="TreeGrafter"/>
</dbReference>
<dbReference type="GO" id="GO:0000287">
    <property type="term" value="F:magnesium ion binding"/>
    <property type="evidence" value="ECO:0007669"/>
    <property type="project" value="UniProtKB-UniRule"/>
</dbReference>
<dbReference type="GO" id="GO:0030145">
    <property type="term" value="F:manganese ion binding"/>
    <property type="evidence" value="ECO:0007669"/>
    <property type="project" value="UniProtKB-UniRule"/>
</dbReference>
<dbReference type="GO" id="GO:0000210">
    <property type="term" value="F:NAD+ diphosphatase activity"/>
    <property type="evidence" value="ECO:0007669"/>
    <property type="project" value="UniProtKB-UniRule"/>
</dbReference>
<dbReference type="GO" id="GO:0035529">
    <property type="term" value="F:NADH pyrophosphatase activity"/>
    <property type="evidence" value="ECO:0007669"/>
    <property type="project" value="TreeGrafter"/>
</dbReference>
<dbReference type="GO" id="GO:0110153">
    <property type="term" value="F:RNA NAD-cap (NMN-forming) hydrolase activity"/>
    <property type="evidence" value="ECO:0007669"/>
    <property type="project" value="RHEA"/>
</dbReference>
<dbReference type="GO" id="GO:0008270">
    <property type="term" value="F:zinc ion binding"/>
    <property type="evidence" value="ECO:0007669"/>
    <property type="project" value="UniProtKB-UniRule"/>
</dbReference>
<dbReference type="GO" id="GO:0019677">
    <property type="term" value="P:NAD catabolic process"/>
    <property type="evidence" value="ECO:0007669"/>
    <property type="project" value="TreeGrafter"/>
</dbReference>
<dbReference type="GO" id="GO:0006734">
    <property type="term" value="P:NADH metabolic process"/>
    <property type="evidence" value="ECO:0007669"/>
    <property type="project" value="TreeGrafter"/>
</dbReference>
<dbReference type="GO" id="GO:0006742">
    <property type="term" value="P:NADP catabolic process"/>
    <property type="evidence" value="ECO:0007669"/>
    <property type="project" value="TreeGrafter"/>
</dbReference>
<dbReference type="CDD" id="cd03429">
    <property type="entry name" value="NUDIX_NADH_pyrophosphatase_Nudt13"/>
    <property type="match status" value="1"/>
</dbReference>
<dbReference type="FunFam" id="3.90.79.10:FF:000004">
    <property type="entry name" value="NADH pyrophosphatase"/>
    <property type="match status" value="1"/>
</dbReference>
<dbReference type="FunFam" id="3.90.79.20:FF:000001">
    <property type="entry name" value="NADH pyrophosphatase"/>
    <property type="match status" value="1"/>
</dbReference>
<dbReference type="Gene3D" id="3.90.79.20">
    <property type="match status" value="1"/>
</dbReference>
<dbReference type="Gene3D" id="3.90.79.10">
    <property type="entry name" value="Nucleoside Triphosphate Pyrophosphohydrolase"/>
    <property type="match status" value="1"/>
</dbReference>
<dbReference type="HAMAP" id="MF_00297">
    <property type="entry name" value="Nudix_NudC"/>
    <property type="match status" value="1"/>
</dbReference>
<dbReference type="InterPro" id="IPR050241">
    <property type="entry name" value="NAD-cap_RNA_hydrolase_NudC"/>
</dbReference>
<dbReference type="InterPro" id="IPR049734">
    <property type="entry name" value="NudC-like_C"/>
</dbReference>
<dbReference type="InterPro" id="IPR015797">
    <property type="entry name" value="NUDIX_hydrolase-like_dom_sf"/>
</dbReference>
<dbReference type="InterPro" id="IPR020084">
    <property type="entry name" value="NUDIX_hydrolase_CS"/>
</dbReference>
<dbReference type="InterPro" id="IPR000086">
    <property type="entry name" value="NUDIX_hydrolase_dom"/>
</dbReference>
<dbReference type="InterPro" id="IPR022925">
    <property type="entry name" value="RNA_Hydrolase_NudC"/>
</dbReference>
<dbReference type="InterPro" id="IPR015376">
    <property type="entry name" value="Znr_NADH_PPase"/>
</dbReference>
<dbReference type="NCBIfam" id="NF001299">
    <property type="entry name" value="PRK00241.1"/>
    <property type="match status" value="1"/>
</dbReference>
<dbReference type="PANTHER" id="PTHR42904:SF6">
    <property type="entry name" value="NAD-CAPPED RNA HYDROLASE NUDT12"/>
    <property type="match status" value="1"/>
</dbReference>
<dbReference type="PANTHER" id="PTHR42904">
    <property type="entry name" value="NUDIX HYDROLASE, NUDC SUBFAMILY"/>
    <property type="match status" value="1"/>
</dbReference>
<dbReference type="Pfam" id="PF00293">
    <property type="entry name" value="NUDIX"/>
    <property type="match status" value="1"/>
</dbReference>
<dbReference type="Pfam" id="PF09297">
    <property type="entry name" value="Zn_ribbon_NUD"/>
    <property type="match status" value="1"/>
</dbReference>
<dbReference type="SUPFAM" id="SSF55811">
    <property type="entry name" value="Nudix"/>
    <property type="match status" value="2"/>
</dbReference>
<dbReference type="PROSITE" id="PS51462">
    <property type="entry name" value="NUDIX"/>
    <property type="match status" value="1"/>
</dbReference>
<dbReference type="PROSITE" id="PS00893">
    <property type="entry name" value="NUDIX_BOX"/>
    <property type="match status" value="1"/>
</dbReference>
<reference key="1">
    <citation type="submission" date="2007-02" db="EMBL/GenBank/DDBJ databases">
        <title>Complete sequence of chromosome of Yersinia pestis Pestoides F.</title>
        <authorList>
            <consortium name="US DOE Joint Genome Institute"/>
            <person name="Copeland A."/>
            <person name="Lucas S."/>
            <person name="Lapidus A."/>
            <person name="Barry K."/>
            <person name="Detter J.C."/>
            <person name="Glavina del Rio T."/>
            <person name="Hammon N."/>
            <person name="Israni S."/>
            <person name="Dalin E."/>
            <person name="Tice H."/>
            <person name="Pitluck S."/>
            <person name="Di Bartolo G."/>
            <person name="Chain P."/>
            <person name="Malfatti S."/>
            <person name="Shin M."/>
            <person name="Vergez L."/>
            <person name="Schmutz J."/>
            <person name="Larimer F."/>
            <person name="Land M."/>
            <person name="Hauser L."/>
            <person name="Worsham P."/>
            <person name="Chu M."/>
            <person name="Bearden S."/>
            <person name="Garcia E."/>
            <person name="Richardson P."/>
        </authorList>
    </citation>
    <scope>NUCLEOTIDE SEQUENCE [LARGE SCALE GENOMIC DNA]</scope>
    <source>
        <strain>Pestoides F</strain>
    </source>
</reference>
<sequence length="260" mass="29678">MELQLTGKESGWWIVSHENKLWLPKGELPQGNAANWSLQGTTARQIGEWQGQSVWLIRQMMPSGMGSVRQLLDVDRGLFQLAGRGVQLAEFYRSHRFCGYCGHEMHASRTEWASLCNHCRERYYPQIAPCVIVAIRRGDEILLAQHVRHRGGINTVLAGFVEVGETLEQAVSREVLEESNIHIKNLRYVTSQPWPFPHSLMMAFMADYDSGELCHDPKELLNAGWYRYDQLPLLPPPGTVARRLIEDTVVLCREHSDLSQ</sequence>
<accession>A4TS22</accession>
<gene>
    <name evidence="1" type="primary">nudC</name>
    <name type="ordered locus">YPDSF_3734</name>
</gene>
<name>NUDC_YERPP</name>
<keyword id="KW-0378">Hydrolase</keyword>
<keyword id="KW-0460">Magnesium</keyword>
<keyword id="KW-0464">Manganese</keyword>
<keyword id="KW-0479">Metal-binding</keyword>
<keyword id="KW-0520">NAD</keyword>
<keyword id="KW-0862">Zinc</keyword>
<proteinExistence type="inferred from homology"/>
<comment type="function">
    <text evidence="1">mRNA decapping enzyme that specifically removes the nicotinamide adenine dinucleotide (NAD) cap from a subset of mRNAs by hydrolyzing the diphosphate linkage to produce nicotinamide mononucleotide (NMN) and 5' monophosphate mRNA. The NAD-cap is present at the 5'-end of some mRNAs and stabilizes RNA against 5'-processing. Has preference for mRNAs with a 5'-end purine. Catalyzes the hydrolysis of a broad range of dinucleotide pyrophosphates.</text>
</comment>
<comment type="catalytic activity">
    <reaction evidence="1">
        <text>a 5'-end NAD(+)-phospho-ribonucleoside in mRNA + H2O = a 5'-end phospho-adenosine-phospho-ribonucleoside in mRNA + beta-nicotinamide D-ribonucleotide + 2 H(+)</text>
        <dbReference type="Rhea" id="RHEA:60876"/>
        <dbReference type="Rhea" id="RHEA-COMP:15698"/>
        <dbReference type="Rhea" id="RHEA-COMP:15719"/>
        <dbReference type="ChEBI" id="CHEBI:14649"/>
        <dbReference type="ChEBI" id="CHEBI:15377"/>
        <dbReference type="ChEBI" id="CHEBI:15378"/>
        <dbReference type="ChEBI" id="CHEBI:144029"/>
        <dbReference type="ChEBI" id="CHEBI:144051"/>
    </reaction>
    <physiologicalReaction direction="left-to-right" evidence="1">
        <dbReference type="Rhea" id="RHEA:60877"/>
    </physiologicalReaction>
</comment>
<comment type="catalytic activity">
    <reaction evidence="1">
        <text>NAD(+) + H2O = beta-nicotinamide D-ribonucleotide + AMP + 2 H(+)</text>
        <dbReference type="Rhea" id="RHEA:11800"/>
        <dbReference type="ChEBI" id="CHEBI:14649"/>
        <dbReference type="ChEBI" id="CHEBI:15377"/>
        <dbReference type="ChEBI" id="CHEBI:15378"/>
        <dbReference type="ChEBI" id="CHEBI:57540"/>
        <dbReference type="ChEBI" id="CHEBI:456215"/>
        <dbReference type="EC" id="3.6.1.22"/>
    </reaction>
</comment>
<comment type="catalytic activity">
    <reaction evidence="1">
        <text>NADH + H2O = reduced beta-nicotinamide D-ribonucleotide + AMP + 2 H(+)</text>
        <dbReference type="Rhea" id="RHEA:48868"/>
        <dbReference type="ChEBI" id="CHEBI:15377"/>
        <dbReference type="ChEBI" id="CHEBI:15378"/>
        <dbReference type="ChEBI" id="CHEBI:57945"/>
        <dbReference type="ChEBI" id="CHEBI:90832"/>
        <dbReference type="ChEBI" id="CHEBI:456215"/>
        <dbReference type="EC" id="3.6.1.22"/>
    </reaction>
</comment>
<comment type="cofactor">
    <cofactor evidence="1">
        <name>Mg(2+)</name>
        <dbReference type="ChEBI" id="CHEBI:18420"/>
    </cofactor>
    <cofactor evidence="1">
        <name>Mn(2+)</name>
        <dbReference type="ChEBI" id="CHEBI:29035"/>
    </cofactor>
    <text evidence="1">Divalent metal cations. Mg(2+) or Mn(2+).</text>
</comment>
<comment type="cofactor">
    <cofactor evidence="1">
        <name>Zn(2+)</name>
        <dbReference type="ChEBI" id="CHEBI:29105"/>
    </cofactor>
    <text evidence="1">Binds 1 zinc ion per subunit.</text>
</comment>
<comment type="subunit">
    <text evidence="1">Homodimer.</text>
</comment>
<comment type="similarity">
    <text evidence="1">Belongs to the Nudix hydrolase family. NudC subfamily.</text>
</comment>